<keyword id="KW-0460">Magnesium</keyword>
<keyword id="KW-0464">Manganese</keyword>
<keyword id="KW-0474">Menaquinone biosynthesis</keyword>
<keyword id="KW-0479">Metal-binding</keyword>
<keyword id="KW-0786">Thiamine pyrophosphate</keyword>
<keyword id="KW-0808">Transferase</keyword>
<sequence length="556" mass="61367">MSVSAFNRRWAAVILEALTRHGVRHICIAPGSRSTPLTLAAAENSAFIHHTHFDERGLGHLALGLAKVSKQPVAVIVTSGTAVANLYPALIEAGLTGEKLILLTADRPPELIDCGANQAIRQPGMFASHPTHSISLPRPTQDIPARWLVSTIDHALGTLHAGGVHINCPFAEPLYGEMDDTGLSWQQRLGDWWQDDKPWLREAPRLESEKQRDWFFWRQKRGVVVAGRMSAEEGKKVALWAQTLGWPLIGDVLSQTGQPLPCADLWLGNAKATSELQQAQIVVQLGSSLTGKRLLQWQASCEPEEYWIVDDIEGRLDPAHHRGRRLIANIADWLELHPAEKRQPWCVEIPRLAEQAMQAVIARRDAFGEAQLAHRICDYLPEQGQLFVGNSLVVRLIDALSQLPAGYPVYSNRGASGIDGLLSTAAGVQRASGKPTLAIVGDLSALYDLNALALLRQVSAPLVLIVVNNNGGQIFSLLPTPQSERERFYLMPQNVHFEHAAAMFELKYHRPQNWQELETAFADAWRTPTTTVIEMVVNDTDGAQTLQQLLAQVSHL</sequence>
<dbReference type="EC" id="2.2.1.9" evidence="1"/>
<dbReference type="EMBL" id="CP000948">
    <property type="protein sequence ID" value="ACB03425.1"/>
    <property type="molecule type" value="Genomic_DNA"/>
</dbReference>
<dbReference type="RefSeq" id="WP_001295284.1">
    <property type="nucleotide sequence ID" value="NC_010473.1"/>
</dbReference>
<dbReference type="SMR" id="B1X8X8"/>
<dbReference type="KEGG" id="ecd:ECDH10B_2425"/>
<dbReference type="HOGENOM" id="CLU_006051_3_0_6"/>
<dbReference type="UniPathway" id="UPA00079"/>
<dbReference type="UniPathway" id="UPA01057">
    <property type="reaction ID" value="UER00164"/>
</dbReference>
<dbReference type="GO" id="GO:0070204">
    <property type="term" value="F:2-succinyl-5-enolpyruvyl-6-hydroxy-3-cyclohexene-1-carboxylic-acid synthase activity"/>
    <property type="evidence" value="ECO:0007669"/>
    <property type="project" value="UniProtKB-UniRule"/>
</dbReference>
<dbReference type="GO" id="GO:0000287">
    <property type="term" value="F:magnesium ion binding"/>
    <property type="evidence" value="ECO:0007669"/>
    <property type="project" value="UniProtKB-UniRule"/>
</dbReference>
<dbReference type="GO" id="GO:0030145">
    <property type="term" value="F:manganese ion binding"/>
    <property type="evidence" value="ECO:0007669"/>
    <property type="project" value="UniProtKB-UniRule"/>
</dbReference>
<dbReference type="GO" id="GO:0030976">
    <property type="term" value="F:thiamine pyrophosphate binding"/>
    <property type="evidence" value="ECO:0007669"/>
    <property type="project" value="UniProtKB-UniRule"/>
</dbReference>
<dbReference type="GO" id="GO:0009234">
    <property type="term" value="P:menaquinone biosynthetic process"/>
    <property type="evidence" value="ECO:0007669"/>
    <property type="project" value="UniProtKB-UniRule"/>
</dbReference>
<dbReference type="CDD" id="cd07037">
    <property type="entry name" value="TPP_PYR_MenD"/>
    <property type="match status" value="1"/>
</dbReference>
<dbReference type="CDD" id="cd02009">
    <property type="entry name" value="TPP_SHCHC_synthase"/>
    <property type="match status" value="1"/>
</dbReference>
<dbReference type="FunFam" id="3.40.50.1220:FF:000010">
    <property type="entry name" value="2-succinyl-5-enolpyruvyl-6-hydroxy-3-cyclohexene-1-carboxylate synthase"/>
    <property type="match status" value="1"/>
</dbReference>
<dbReference type="FunFam" id="3.40.50.970:FF:000029">
    <property type="entry name" value="2-succinyl-5-enolpyruvyl-6-hydroxy-3-cyclohexene-1-carboxylate synthase"/>
    <property type="match status" value="1"/>
</dbReference>
<dbReference type="FunFam" id="3.40.50.970:FF:000035">
    <property type="entry name" value="2-succinyl-5-enolpyruvyl-6-hydroxy-3-cyclohexene-1-carboxylate synthase"/>
    <property type="match status" value="1"/>
</dbReference>
<dbReference type="Gene3D" id="3.40.50.970">
    <property type="match status" value="2"/>
</dbReference>
<dbReference type="Gene3D" id="3.40.50.1220">
    <property type="entry name" value="TPP-binding domain"/>
    <property type="match status" value="1"/>
</dbReference>
<dbReference type="HAMAP" id="MF_01659">
    <property type="entry name" value="MenD"/>
    <property type="match status" value="1"/>
</dbReference>
<dbReference type="InterPro" id="IPR004433">
    <property type="entry name" value="MenaQ_synth_MenD"/>
</dbReference>
<dbReference type="InterPro" id="IPR032264">
    <property type="entry name" value="MenD_middle"/>
</dbReference>
<dbReference type="InterPro" id="IPR029061">
    <property type="entry name" value="THDP-binding"/>
</dbReference>
<dbReference type="InterPro" id="IPR012001">
    <property type="entry name" value="Thiamin_PyroP_enz_TPP-bd_dom"/>
</dbReference>
<dbReference type="InterPro" id="IPR011766">
    <property type="entry name" value="TPP_enzyme_TPP-bd"/>
</dbReference>
<dbReference type="NCBIfam" id="TIGR00173">
    <property type="entry name" value="menD"/>
    <property type="match status" value="1"/>
</dbReference>
<dbReference type="PANTHER" id="PTHR42916">
    <property type="entry name" value="2-SUCCINYL-5-ENOLPYRUVYL-6-HYDROXY-3-CYCLOHEXENE-1-CARBOXYLATE SYNTHASE"/>
    <property type="match status" value="1"/>
</dbReference>
<dbReference type="PANTHER" id="PTHR42916:SF1">
    <property type="entry name" value="PROTEIN PHYLLO, CHLOROPLASTIC"/>
    <property type="match status" value="1"/>
</dbReference>
<dbReference type="Pfam" id="PF02775">
    <property type="entry name" value="TPP_enzyme_C"/>
    <property type="match status" value="1"/>
</dbReference>
<dbReference type="Pfam" id="PF16582">
    <property type="entry name" value="TPP_enzyme_M_2"/>
    <property type="match status" value="1"/>
</dbReference>
<dbReference type="Pfam" id="PF02776">
    <property type="entry name" value="TPP_enzyme_N"/>
    <property type="match status" value="1"/>
</dbReference>
<dbReference type="PIRSF" id="PIRSF004983">
    <property type="entry name" value="MenD"/>
    <property type="match status" value="1"/>
</dbReference>
<dbReference type="SUPFAM" id="SSF52518">
    <property type="entry name" value="Thiamin diphosphate-binding fold (THDP-binding)"/>
    <property type="match status" value="2"/>
</dbReference>
<comment type="function">
    <text evidence="1">Catalyzes the thiamine diphosphate-dependent decarboxylation of 2-oxoglutarate and the subsequent addition of the resulting succinic semialdehyde-thiamine pyrophosphate anion to isochorismate to yield 2-succinyl-5-enolpyruvyl-6-hydroxy-3-cyclohexene-1-carboxylate (SEPHCHC).</text>
</comment>
<comment type="catalytic activity">
    <reaction evidence="1">
        <text>isochorismate + 2-oxoglutarate + H(+) = 5-enolpyruvoyl-6-hydroxy-2-succinyl-cyclohex-3-ene-1-carboxylate + CO2</text>
        <dbReference type="Rhea" id="RHEA:25593"/>
        <dbReference type="ChEBI" id="CHEBI:15378"/>
        <dbReference type="ChEBI" id="CHEBI:16526"/>
        <dbReference type="ChEBI" id="CHEBI:16810"/>
        <dbReference type="ChEBI" id="CHEBI:29780"/>
        <dbReference type="ChEBI" id="CHEBI:58818"/>
        <dbReference type="EC" id="2.2.1.9"/>
    </reaction>
</comment>
<comment type="cofactor">
    <cofactor evidence="1">
        <name>Mg(2+)</name>
        <dbReference type="ChEBI" id="CHEBI:18420"/>
    </cofactor>
    <cofactor evidence="1">
        <name>Mn(2+)</name>
        <dbReference type="ChEBI" id="CHEBI:29035"/>
    </cofactor>
</comment>
<comment type="cofactor">
    <cofactor evidence="1">
        <name>thiamine diphosphate</name>
        <dbReference type="ChEBI" id="CHEBI:58937"/>
    </cofactor>
    <text evidence="1">Binds 1 thiamine pyrophosphate per subunit.</text>
</comment>
<comment type="pathway">
    <text evidence="1">Quinol/quinone metabolism; 1,4-dihydroxy-2-naphthoate biosynthesis; 1,4-dihydroxy-2-naphthoate from chorismate: step 2/7.</text>
</comment>
<comment type="pathway">
    <text evidence="1">Quinol/quinone metabolism; menaquinone biosynthesis.</text>
</comment>
<comment type="subunit">
    <text evidence="1">Homodimer.</text>
</comment>
<comment type="similarity">
    <text evidence="1">Belongs to the TPP enzyme family. MenD subfamily.</text>
</comment>
<gene>
    <name evidence="1" type="primary">menD</name>
    <name type="ordered locus">ECDH10B_2425</name>
</gene>
<protein>
    <recommendedName>
        <fullName evidence="1">2-succinyl-5-enolpyruvyl-6-hydroxy-3-cyclohexene-1-carboxylate synthase</fullName>
        <shortName evidence="1">SEPHCHC synthase</shortName>
        <ecNumber evidence="1">2.2.1.9</ecNumber>
    </recommendedName>
    <alternativeName>
        <fullName evidence="1">Menaquinone biosynthesis protein MenD</fullName>
    </alternativeName>
</protein>
<feature type="chain" id="PRO_1000187074" description="2-succinyl-5-enolpyruvyl-6-hydroxy-3-cyclohexene-1-carboxylate synthase">
    <location>
        <begin position="1"/>
        <end position="556"/>
    </location>
</feature>
<accession>B1X8X8</accession>
<organism>
    <name type="scientific">Escherichia coli (strain K12 / DH10B)</name>
    <dbReference type="NCBI Taxonomy" id="316385"/>
    <lineage>
        <taxon>Bacteria</taxon>
        <taxon>Pseudomonadati</taxon>
        <taxon>Pseudomonadota</taxon>
        <taxon>Gammaproteobacteria</taxon>
        <taxon>Enterobacterales</taxon>
        <taxon>Enterobacteriaceae</taxon>
        <taxon>Escherichia</taxon>
    </lineage>
</organism>
<reference key="1">
    <citation type="journal article" date="2008" name="J. Bacteriol.">
        <title>The complete genome sequence of Escherichia coli DH10B: insights into the biology of a laboratory workhorse.</title>
        <authorList>
            <person name="Durfee T."/>
            <person name="Nelson R."/>
            <person name="Baldwin S."/>
            <person name="Plunkett G. III"/>
            <person name="Burland V."/>
            <person name="Mau B."/>
            <person name="Petrosino J.F."/>
            <person name="Qin X."/>
            <person name="Muzny D.M."/>
            <person name="Ayele M."/>
            <person name="Gibbs R.A."/>
            <person name="Csorgo B."/>
            <person name="Posfai G."/>
            <person name="Weinstock G.M."/>
            <person name="Blattner F.R."/>
        </authorList>
    </citation>
    <scope>NUCLEOTIDE SEQUENCE [LARGE SCALE GENOMIC DNA]</scope>
    <source>
        <strain>K12 / DH10B</strain>
    </source>
</reference>
<name>MEND_ECODH</name>
<proteinExistence type="inferred from homology"/>
<evidence type="ECO:0000255" key="1">
    <source>
        <dbReference type="HAMAP-Rule" id="MF_01659"/>
    </source>
</evidence>